<proteinExistence type="inferred from homology"/>
<dbReference type="EC" id="2.2.1.3"/>
<dbReference type="EMBL" id="X02424">
    <property type="protein sequence ID" value="CAA26276.2"/>
    <property type="molecule type" value="Genomic_DNA"/>
</dbReference>
<dbReference type="PIR" id="A23009">
    <property type="entry name" value="XJHQFK"/>
</dbReference>
<dbReference type="SMR" id="P06834"/>
<dbReference type="PhylomeDB" id="P06834"/>
<dbReference type="GO" id="GO:0005829">
    <property type="term" value="C:cytosol"/>
    <property type="evidence" value="ECO:0007669"/>
    <property type="project" value="TreeGrafter"/>
</dbReference>
<dbReference type="GO" id="GO:0005634">
    <property type="term" value="C:nucleus"/>
    <property type="evidence" value="ECO:0007669"/>
    <property type="project" value="TreeGrafter"/>
</dbReference>
<dbReference type="GO" id="GO:0005777">
    <property type="term" value="C:peroxisome"/>
    <property type="evidence" value="ECO:0007669"/>
    <property type="project" value="UniProtKB-SubCell"/>
</dbReference>
<dbReference type="GO" id="GO:0047896">
    <property type="term" value="F:formaldehyde transketolase activity"/>
    <property type="evidence" value="ECO:0007669"/>
    <property type="project" value="UniProtKB-EC"/>
</dbReference>
<dbReference type="GO" id="GO:0046872">
    <property type="term" value="F:metal ion binding"/>
    <property type="evidence" value="ECO:0007669"/>
    <property type="project" value="UniProtKB-KW"/>
</dbReference>
<dbReference type="GO" id="GO:0004802">
    <property type="term" value="F:transketolase activity"/>
    <property type="evidence" value="ECO:0007669"/>
    <property type="project" value="TreeGrafter"/>
</dbReference>
<dbReference type="GO" id="GO:0015945">
    <property type="term" value="P:methanol metabolic process"/>
    <property type="evidence" value="ECO:0007669"/>
    <property type="project" value="UniProtKB-KW"/>
</dbReference>
<dbReference type="GO" id="GO:0006098">
    <property type="term" value="P:pentose-phosphate shunt"/>
    <property type="evidence" value="ECO:0007669"/>
    <property type="project" value="TreeGrafter"/>
</dbReference>
<dbReference type="CDD" id="cd07033">
    <property type="entry name" value="TPP_PYR_DXS_TK_like"/>
    <property type="match status" value="1"/>
</dbReference>
<dbReference type="CDD" id="cd02012">
    <property type="entry name" value="TPP_TK"/>
    <property type="match status" value="1"/>
</dbReference>
<dbReference type="FunFam" id="3.40.50.970:FF:000004">
    <property type="entry name" value="Transketolase"/>
    <property type="match status" value="1"/>
</dbReference>
<dbReference type="Gene3D" id="3.40.50.920">
    <property type="match status" value="1"/>
</dbReference>
<dbReference type="Gene3D" id="3.40.50.970">
    <property type="match status" value="2"/>
</dbReference>
<dbReference type="InterPro" id="IPR029061">
    <property type="entry name" value="THDP-binding"/>
</dbReference>
<dbReference type="InterPro" id="IPR009014">
    <property type="entry name" value="Transketo_C/PFOR_II"/>
</dbReference>
<dbReference type="InterPro" id="IPR055152">
    <property type="entry name" value="Transketolase-like_C_2"/>
</dbReference>
<dbReference type="InterPro" id="IPR005475">
    <property type="entry name" value="Transketolase-like_Pyr-bd"/>
</dbReference>
<dbReference type="InterPro" id="IPR020826">
    <property type="entry name" value="Transketolase_BS"/>
</dbReference>
<dbReference type="InterPro" id="IPR049557">
    <property type="entry name" value="Transketolase_CS"/>
</dbReference>
<dbReference type="InterPro" id="IPR033247">
    <property type="entry name" value="Transketolase_fam"/>
</dbReference>
<dbReference type="InterPro" id="IPR005474">
    <property type="entry name" value="Transketolase_N"/>
</dbReference>
<dbReference type="PANTHER" id="PTHR43522">
    <property type="entry name" value="TRANSKETOLASE"/>
    <property type="match status" value="1"/>
</dbReference>
<dbReference type="PANTHER" id="PTHR43522:SF6">
    <property type="entry name" value="TRANSKETOLASE-LIKE PYRIMIDINE-BINDING DOMAIN-CONTAINING PROTEIN-RELATED"/>
    <property type="match status" value="1"/>
</dbReference>
<dbReference type="Pfam" id="PF02779">
    <property type="entry name" value="Transket_pyr"/>
    <property type="match status" value="1"/>
</dbReference>
<dbReference type="Pfam" id="PF22613">
    <property type="entry name" value="Transketolase_C_1"/>
    <property type="match status" value="1"/>
</dbReference>
<dbReference type="Pfam" id="PF00456">
    <property type="entry name" value="Transketolase_N"/>
    <property type="match status" value="1"/>
</dbReference>
<dbReference type="SMART" id="SM00861">
    <property type="entry name" value="Transket_pyr"/>
    <property type="match status" value="1"/>
</dbReference>
<dbReference type="SUPFAM" id="SSF52518">
    <property type="entry name" value="Thiamin diphosphate-binding fold (THDP-binding)"/>
    <property type="match status" value="2"/>
</dbReference>
<dbReference type="SUPFAM" id="SSF52922">
    <property type="entry name" value="TK C-terminal domain-like"/>
    <property type="match status" value="1"/>
</dbReference>
<dbReference type="PROSITE" id="PS00801">
    <property type="entry name" value="TRANSKETOLASE_1"/>
    <property type="match status" value="1"/>
</dbReference>
<dbReference type="PROSITE" id="PS00802">
    <property type="entry name" value="TRANSKETOLASE_2"/>
    <property type="match status" value="1"/>
</dbReference>
<protein>
    <recommendedName>
        <fullName>Dihydroxyacetone synthase</fullName>
        <shortName>DHAS</shortName>
        <ecNumber>2.2.1.3</ecNumber>
    </recommendedName>
    <alternativeName>
        <fullName>Formaldehyde transketolase</fullName>
    </alternativeName>
    <alternativeName>
        <fullName>Glycerone synthase</fullName>
    </alternativeName>
</protein>
<reference key="1">
    <citation type="journal article" date="1985" name="Nucleic Acids Res.">
        <title>Cloning and characterization of the DAS gene encoding the major methanol assimilatory enzyme from the methylotrophic yeast Hansenula polymorpha.</title>
        <authorList>
            <person name="Janowicz Z.A."/>
            <person name="Eckart M.R."/>
            <person name="Drewke C."/>
            <person name="Roggenkamp R.O."/>
            <person name="Hollenberg C.P."/>
            <person name="Maat J."/>
            <person name="Ledeboer A.M."/>
            <person name="Visser C."/>
            <person name="Verrips C.T."/>
        </authorList>
    </citation>
    <scope>NUCLEOTIDE SEQUENCE [GENOMIC DNA]</scope>
    <source>
        <strain>ATCC 34438 / CBS 4732 / DSM 70277 / JCM 3621 / NBRC 1476 / NRRL Y-5445</strain>
    </source>
</reference>
<reference key="2">
    <citation type="submission" date="2005-09" db="EMBL/GenBank/DDBJ databases">
        <authorList>
            <person name="Veenhuis M."/>
        </authorList>
    </citation>
    <scope>SEQUENCE REVISION TO 509-510; 550-561 AND 586</scope>
</reference>
<reference key="3">
    <citation type="journal article" date="1992" name="Mol. Gen. Genet.">
        <title>Targeting sequences of the two major peroxisomal proteins in the methylotrophic yeast Hansenula polymorpha.</title>
        <authorList>
            <person name="Hansen H."/>
            <person name="Didion T."/>
            <person name="Thiemann A."/>
            <person name="Veenhuis M."/>
            <person name="Roggenkamp R.O."/>
        </authorList>
    </citation>
    <scope>NUCLEOTIDE SEQUENCE [GENOMIC DNA] OF 667-710</scope>
    <scope>SEQUENCE REVISION</scope>
    <source>
        <strain>ATCC 34438 / CBS 4732 / DSM 70277 / JCM 3621 / NBRC 1476 / NRRL Y-5445</strain>
    </source>
</reference>
<comment type="function">
    <text>This is the major methanol assimilatory enzyme from the methylotrophic Hansenula polymorpha.</text>
</comment>
<comment type="catalytic activity">
    <reaction>
        <text>D-xylulose 5-phosphate + formaldehyde = dihydroxyacetone + D-glyceraldehyde 3-phosphate</text>
        <dbReference type="Rhea" id="RHEA:24264"/>
        <dbReference type="ChEBI" id="CHEBI:16016"/>
        <dbReference type="ChEBI" id="CHEBI:16842"/>
        <dbReference type="ChEBI" id="CHEBI:57737"/>
        <dbReference type="ChEBI" id="CHEBI:59776"/>
        <dbReference type="EC" id="2.2.1.3"/>
    </reaction>
</comment>
<comment type="cofactor">
    <cofactor evidence="1">
        <name>Mg(2+)</name>
        <dbReference type="ChEBI" id="CHEBI:18420"/>
    </cofactor>
    <cofactor evidence="1">
        <name>Ca(2+)</name>
        <dbReference type="ChEBI" id="CHEBI:29108"/>
    </cofactor>
    <cofactor evidence="1">
        <name>Mn(2+)</name>
        <dbReference type="ChEBI" id="CHEBI:29035"/>
    </cofactor>
    <cofactor evidence="1">
        <name>Co(2+)</name>
        <dbReference type="ChEBI" id="CHEBI:48828"/>
    </cofactor>
    <text evidence="1">Binds 1 Mg(2+) ion per subunit. Can also utilize other divalent metal cations, such as Ca(2+), Mn(2+) and Co(2+).</text>
</comment>
<comment type="cofactor">
    <cofactor evidence="1">
        <name>thiamine diphosphate</name>
        <dbReference type="ChEBI" id="CHEBI:58937"/>
    </cofactor>
    <text evidence="1">Binds 1 thiamine pyrophosphate per subunit.</text>
</comment>
<comment type="subcellular location">
    <subcellularLocation>
        <location>Peroxisome</location>
    </subcellularLocation>
</comment>
<comment type="similarity">
    <text evidence="3">Belongs to the transketolase family.</text>
</comment>
<name>DAS_PICAN</name>
<sequence length="710" mass="78731">MSMRIPKAASVNDEQHQRIIKYGRALVLDIVEQYGGGHPGSAMGAMAIGIALWKYTLKYAPNDPNYFNRDRFVLSNGHVCLFQYIFQHLYGLKSMTMAQLKSYHSNDFHSLCPGHPEIEHDAVEVTTGPLGQGISNSVGLAIATKNLAATYNKPGFDIITNKVYCMVGDACLQEGPALESISLAGHMGLDNLIVLYDNNQVCCDGSVDIANTEDISAKFKACNWNVIEVENASEDVATIVKALEYAQAEKHRPTLINCRTVIGSGAAFENHCAAHGNALGEDGVRELKIKYGMNPAQKFYIPQDVYDFFKEKPAEGDKLVAEWKSLVAKYVKAYPEEGQEFLARMRGELPKNWKSFLPQQEFTGDAPTRAAARELVRALGQNCKSVIAGCADLSVSVNLQWPGVKYFMDPSLSTQCGLSGDYSGRYIEYGIREHAMCAIANGLAAYNKGTFLPITSTFFMFYLYAAPAIRMAGLQELKAIHIGTHDSINEGENGPTHQPVESPALFRAMPNIYYMRPVDSAEVFGLFQKAVELPFSSILSLSRNEVLQYPGKSSAEKAQRGGYILEDAENAEVQIIGVGAEMEFAYKAAKILGRKFRTRVLSIPCTRLFDEQSIGYRRSVLRKDGRQVPTVVVDGHVAFGWERYATASYCMNTYGKSLPPEVIYEYFGYNPATIAKKVEAYVRACQRDPLLLHDFLDLKEKPNHDKVNKL</sequence>
<feature type="chain" id="PRO_0000191911" description="Dihydroxyacetone synthase">
    <location>
        <begin position="1"/>
        <end position="710"/>
    </location>
</feature>
<feature type="short sequence motif" description="Microbody targeting signal" evidence="2">
    <location>
        <begin position="708"/>
        <end position="710"/>
    </location>
</feature>
<feature type="active site" description="Proton donor" evidence="1">
    <location>
        <position position="433"/>
    </location>
</feature>
<feature type="binding site" evidence="1">
    <location>
        <position position="78"/>
    </location>
    <ligand>
        <name>thiamine diphosphate</name>
        <dbReference type="ChEBI" id="CHEBI:58937"/>
    </ligand>
</feature>
<feature type="binding site" evidence="1">
    <location>
        <begin position="128"/>
        <end position="130"/>
    </location>
    <ligand>
        <name>thiamine diphosphate</name>
        <dbReference type="ChEBI" id="CHEBI:58937"/>
    </ligand>
</feature>
<feature type="binding site" evidence="1">
    <location>
        <position position="169"/>
    </location>
    <ligand>
        <name>Mg(2+)</name>
        <dbReference type="ChEBI" id="CHEBI:18420"/>
    </ligand>
</feature>
<feature type="binding site" evidence="1">
    <location>
        <position position="199"/>
    </location>
    <ligand>
        <name>Mg(2+)</name>
        <dbReference type="ChEBI" id="CHEBI:18420"/>
    </ligand>
</feature>
<feature type="binding site" evidence="1">
    <location>
        <position position="199"/>
    </location>
    <ligand>
        <name>thiamine diphosphate</name>
        <dbReference type="ChEBI" id="CHEBI:58937"/>
    </ligand>
</feature>
<feature type="binding site" evidence="1">
    <location>
        <position position="201"/>
    </location>
    <ligand>
        <name>Mg(2+)</name>
        <dbReference type="ChEBI" id="CHEBI:18420"/>
    </ligand>
</feature>
<feature type="binding site" evidence="1">
    <location>
        <position position="275"/>
    </location>
    <ligand>
        <name>thiamine diphosphate</name>
        <dbReference type="ChEBI" id="CHEBI:58937"/>
    </ligand>
</feature>
<feature type="binding site" evidence="1">
    <location>
        <position position="433"/>
    </location>
    <ligand>
        <name>thiamine diphosphate</name>
        <dbReference type="ChEBI" id="CHEBI:58937"/>
    </ligand>
</feature>
<feature type="binding site" evidence="1">
    <location>
        <position position="461"/>
    </location>
    <ligand>
        <name>thiamine diphosphate</name>
        <dbReference type="ChEBI" id="CHEBI:58937"/>
    </ligand>
</feature>
<feature type="site" description="Important for catalytic activity" evidence="1">
    <location>
        <position position="38"/>
    </location>
</feature>
<feature type="site" description="Important for catalytic activity" evidence="1">
    <location>
        <position position="275"/>
    </location>
</feature>
<gene>
    <name type="primary">DAS</name>
</gene>
<keyword id="KW-0460">Magnesium</keyword>
<keyword id="KW-0479">Metal-binding</keyword>
<keyword id="KW-0485">Methanol utilization</keyword>
<keyword id="KW-0576">Peroxisome</keyword>
<keyword id="KW-0786">Thiamine pyrophosphate</keyword>
<keyword id="KW-0808">Transferase</keyword>
<organism>
    <name type="scientific">Pichia angusta</name>
    <name type="common">Yeast</name>
    <name type="synonym">Hansenula polymorpha</name>
    <dbReference type="NCBI Taxonomy" id="870730"/>
    <lineage>
        <taxon>Eukaryota</taxon>
        <taxon>Fungi</taxon>
        <taxon>Dikarya</taxon>
        <taxon>Ascomycota</taxon>
        <taxon>Saccharomycotina</taxon>
        <taxon>Pichiomycetes</taxon>
        <taxon>Pichiales</taxon>
        <taxon>Pichiaceae</taxon>
        <taxon>Ogataea</taxon>
    </lineage>
</organism>
<accession>P06834</accession>
<evidence type="ECO:0000250" key="1"/>
<evidence type="ECO:0000255" key="2"/>
<evidence type="ECO:0000305" key="3"/>